<protein>
    <recommendedName>
        <fullName>Pantothenate kinase</fullName>
        <ecNumber>2.7.1.33</ecNumber>
    </recommendedName>
    <alternativeName>
        <fullName>Pantothenic acid kinase</fullName>
    </alternativeName>
</protein>
<feature type="chain" id="PRO_0000411308" description="Pantothenate kinase">
    <location>
        <begin position="1"/>
        <end position="306"/>
    </location>
</feature>
<feature type="binding site" evidence="2">
    <location>
        <begin position="91"/>
        <end position="98"/>
    </location>
    <ligand>
        <name>ATP</name>
        <dbReference type="ChEBI" id="CHEBI:30616"/>
    </ligand>
</feature>
<name>COAA_STRPQ</name>
<gene>
    <name type="primary">coaA</name>
    <name type="ordered locus">SPs1071</name>
</gene>
<reference key="1">
    <citation type="journal article" date="2003" name="Genome Res.">
        <title>Genome sequence of an M3 strain of Streptococcus pyogenes reveals a large-scale genomic rearrangement in invasive strains and new insights into phage evolution.</title>
        <authorList>
            <person name="Nakagawa I."/>
            <person name="Kurokawa K."/>
            <person name="Yamashita A."/>
            <person name="Nakata M."/>
            <person name="Tomiyasu Y."/>
            <person name="Okahashi N."/>
            <person name="Kawabata S."/>
            <person name="Yamazaki K."/>
            <person name="Shiba T."/>
            <person name="Yasunaga T."/>
            <person name="Hayashi H."/>
            <person name="Hattori M."/>
            <person name="Hamada S."/>
        </authorList>
    </citation>
    <scope>NUCLEOTIDE SEQUENCE [LARGE SCALE GENOMIC DNA]</scope>
    <source>
        <strain>SSI-1</strain>
    </source>
</reference>
<dbReference type="EC" id="2.7.1.33"/>
<dbReference type="EMBL" id="BA000034">
    <property type="protein sequence ID" value="BAC64166.1"/>
    <property type="molecule type" value="Genomic_DNA"/>
</dbReference>
<dbReference type="RefSeq" id="WP_011054527.1">
    <property type="nucleotide sequence ID" value="NC_004606.1"/>
</dbReference>
<dbReference type="SMR" id="P0DA41"/>
<dbReference type="KEGG" id="sps:SPs1071"/>
<dbReference type="HOGENOM" id="CLU_053818_1_1_9"/>
<dbReference type="UniPathway" id="UPA00241">
    <property type="reaction ID" value="UER00352"/>
</dbReference>
<dbReference type="GO" id="GO:0005737">
    <property type="term" value="C:cytoplasm"/>
    <property type="evidence" value="ECO:0007669"/>
    <property type="project" value="UniProtKB-SubCell"/>
</dbReference>
<dbReference type="GO" id="GO:0005524">
    <property type="term" value="F:ATP binding"/>
    <property type="evidence" value="ECO:0007669"/>
    <property type="project" value="UniProtKB-UniRule"/>
</dbReference>
<dbReference type="GO" id="GO:0004594">
    <property type="term" value="F:pantothenate kinase activity"/>
    <property type="evidence" value="ECO:0007669"/>
    <property type="project" value="UniProtKB-UniRule"/>
</dbReference>
<dbReference type="GO" id="GO:0015937">
    <property type="term" value="P:coenzyme A biosynthetic process"/>
    <property type="evidence" value="ECO:0007669"/>
    <property type="project" value="UniProtKB-UniRule"/>
</dbReference>
<dbReference type="CDD" id="cd02025">
    <property type="entry name" value="PanK"/>
    <property type="match status" value="1"/>
</dbReference>
<dbReference type="Gene3D" id="3.40.50.300">
    <property type="entry name" value="P-loop containing nucleotide triphosphate hydrolases"/>
    <property type="match status" value="1"/>
</dbReference>
<dbReference type="HAMAP" id="MF_00215">
    <property type="entry name" value="Pantothen_kinase_1"/>
    <property type="match status" value="1"/>
</dbReference>
<dbReference type="InterPro" id="IPR027417">
    <property type="entry name" value="P-loop_NTPase"/>
</dbReference>
<dbReference type="InterPro" id="IPR004566">
    <property type="entry name" value="PanK"/>
</dbReference>
<dbReference type="InterPro" id="IPR006083">
    <property type="entry name" value="PRK/URK"/>
</dbReference>
<dbReference type="NCBIfam" id="TIGR00554">
    <property type="entry name" value="panK_bact"/>
    <property type="match status" value="1"/>
</dbReference>
<dbReference type="PANTHER" id="PTHR10285">
    <property type="entry name" value="URIDINE KINASE"/>
    <property type="match status" value="1"/>
</dbReference>
<dbReference type="Pfam" id="PF00485">
    <property type="entry name" value="PRK"/>
    <property type="match status" value="1"/>
</dbReference>
<dbReference type="PIRSF" id="PIRSF000545">
    <property type="entry name" value="Pantothenate_kin"/>
    <property type="match status" value="1"/>
</dbReference>
<dbReference type="SUPFAM" id="SSF52540">
    <property type="entry name" value="P-loop containing nucleoside triphosphate hydrolases"/>
    <property type="match status" value="1"/>
</dbReference>
<proteinExistence type="inferred from homology"/>
<keyword id="KW-0067">ATP-binding</keyword>
<keyword id="KW-0173">Coenzyme A biosynthesis</keyword>
<keyword id="KW-0963">Cytoplasm</keyword>
<keyword id="KW-0418">Kinase</keyword>
<keyword id="KW-0547">Nucleotide-binding</keyword>
<keyword id="KW-0808">Transferase</keyword>
<accession>P0DA41</accession>
<accession>Q8K7C7</accession>
<sequence length="306" mass="35609">MSNKFINFEKISRESWKTLHQKAKALLTQEELKSITSLNDNISINDVIDIYLPLINLIQVYKIAQENLSFSKSLFLKKDIQLRPFIIGISGSVAVGKSTTSRLLQLLLSRTHPNSQVELVTTDGFLYPNQFLIEQGLLNRKGFPESYNMELLLDFLDSIKNGQTAFAPVYSHDIYDIIPNQKQSFNNPDFLIVEGINVFQNQQNNRLYMSDYFDFSIYIDADSSHIETWYIERFLSILKLAKRDPHNYYAQYAQLPRSEAIAFARNVWKTVNLENLEKFIEPTRNRAELILHKSADHKIDEIYLKK</sequence>
<comment type="catalytic activity">
    <reaction>
        <text>(R)-pantothenate + ATP = (R)-4'-phosphopantothenate + ADP + H(+)</text>
        <dbReference type="Rhea" id="RHEA:16373"/>
        <dbReference type="ChEBI" id="CHEBI:10986"/>
        <dbReference type="ChEBI" id="CHEBI:15378"/>
        <dbReference type="ChEBI" id="CHEBI:29032"/>
        <dbReference type="ChEBI" id="CHEBI:30616"/>
        <dbReference type="ChEBI" id="CHEBI:456216"/>
        <dbReference type="EC" id="2.7.1.33"/>
    </reaction>
</comment>
<comment type="pathway">
    <text>Cofactor biosynthesis; coenzyme A biosynthesis; CoA from (R)-pantothenate: step 1/5.</text>
</comment>
<comment type="subcellular location">
    <subcellularLocation>
        <location evidence="1">Cytoplasm</location>
    </subcellularLocation>
</comment>
<comment type="similarity">
    <text evidence="3">Belongs to the prokaryotic pantothenate kinase family.</text>
</comment>
<organism>
    <name type="scientific">Streptococcus pyogenes serotype M3 (strain SSI-1)</name>
    <dbReference type="NCBI Taxonomy" id="193567"/>
    <lineage>
        <taxon>Bacteria</taxon>
        <taxon>Bacillati</taxon>
        <taxon>Bacillota</taxon>
        <taxon>Bacilli</taxon>
        <taxon>Lactobacillales</taxon>
        <taxon>Streptococcaceae</taxon>
        <taxon>Streptococcus</taxon>
    </lineage>
</organism>
<evidence type="ECO:0000250" key="1"/>
<evidence type="ECO:0000255" key="2"/>
<evidence type="ECO:0000305" key="3"/>